<proteinExistence type="evidence at transcript level"/>
<protein>
    <recommendedName>
        <fullName>Uncharacterized protein YviE</fullName>
    </recommendedName>
</protein>
<dbReference type="EMBL" id="U56901">
    <property type="protein sequence ID" value="AAC44948.1"/>
    <property type="molecule type" value="Genomic_DNA"/>
</dbReference>
<dbReference type="EMBL" id="AL009126">
    <property type="protein sequence ID" value="CAB15556.1"/>
    <property type="molecule type" value="Genomic_DNA"/>
</dbReference>
<dbReference type="PIR" id="B70042">
    <property type="entry name" value="B70042"/>
</dbReference>
<dbReference type="RefSeq" id="NP_391419.1">
    <property type="nucleotide sequence ID" value="NC_000964.3"/>
</dbReference>
<dbReference type="RefSeq" id="WP_003243053.1">
    <property type="nucleotide sequence ID" value="NZ_OZ025638.1"/>
</dbReference>
<dbReference type="SMR" id="P96502"/>
<dbReference type="FunCoup" id="P96502">
    <property type="interactions" value="28"/>
</dbReference>
<dbReference type="STRING" id="224308.BSU35390"/>
<dbReference type="PaxDb" id="224308-BSU35390"/>
<dbReference type="EnsemblBacteria" id="CAB15556">
    <property type="protein sequence ID" value="CAB15556"/>
    <property type="gene ID" value="BSU_35390"/>
</dbReference>
<dbReference type="GeneID" id="936735"/>
<dbReference type="KEGG" id="bsu:BSU35390"/>
<dbReference type="PATRIC" id="fig|224308.179.peg.3830"/>
<dbReference type="eggNOG" id="ENOG5031RPF">
    <property type="taxonomic scope" value="Bacteria"/>
</dbReference>
<dbReference type="InParanoid" id="P96502"/>
<dbReference type="OrthoDB" id="2112831at2"/>
<dbReference type="BioCyc" id="BSUB:BSU35390-MONOMER"/>
<dbReference type="Proteomes" id="UP000001570">
    <property type="component" value="Chromosome"/>
</dbReference>
<dbReference type="InterPro" id="IPR045527">
    <property type="entry name" value="DUF6470"/>
</dbReference>
<dbReference type="Pfam" id="PF20074">
    <property type="entry name" value="DUF6470"/>
    <property type="match status" value="1"/>
</dbReference>
<sequence>MQIPRLIMHSVQGKIGLTTTPASLKMEQPQADLEIEQPSAEMEISVTPGKLTIDQTQAWEELDRKHVFKRIEEAAQQGHEDVMEGIARTAEEGDELMKIENKGNPIASQARRNSEMHQIQLGENYAPSLSRVKIQYTPSQLDVQITPRKPVIQAEPHKPIVEYTPGNVKVDMLQYPDLNIDVEYPKESPEK</sequence>
<evidence type="ECO:0000305" key="1">
    <source>
    </source>
</evidence>
<comment type="induction">
    <text evidence="1">Transcriptionally regulated by SigD.</text>
</comment>
<name>YVIE_BACSU</name>
<feature type="chain" id="PRO_0000379107" description="Uncharacterized protein YviE">
    <location>
        <begin position="1"/>
        <end position="191"/>
    </location>
</feature>
<reference key="1">
    <citation type="journal article" date="1996" name="Microbiology">
        <title>Sequence of the 305 degrees-307 degrees region of the Bacillus subtilis chromosome.</title>
        <authorList>
            <person name="Soldo B."/>
            <person name="Lazarevic V."/>
            <person name="Mauel C."/>
            <person name="Karamata D."/>
        </authorList>
    </citation>
    <scope>NUCLEOTIDE SEQUENCE [GENOMIC DNA]</scope>
    <source>
        <strain>168</strain>
    </source>
</reference>
<reference key="2">
    <citation type="journal article" date="1997" name="Nature">
        <title>The complete genome sequence of the Gram-positive bacterium Bacillus subtilis.</title>
        <authorList>
            <person name="Kunst F."/>
            <person name="Ogasawara N."/>
            <person name="Moszer I."/>
            <person name="Albertini A.M."/>
            <person name="Alloni G."/>
            <person name="Azevedo V."/>
            <person name="Bertero M.G."/>
            <person name="Bessieres P."/>
            <person name="Bolotin A."/>
            <person name="Borchert S."/>
            <person name="Borriss R."/>
            <person name="Boursier L."/>
            <person name="Brans A."/>
            <person name="Braun M."/>
            <person name="Brignell S.C."/>
            <person name="Bron S."/>
            <person name="Brouillet S."/>
            <person name="Bruschi C.V."/>
            <person name="Caldwell B."/>
            <person name="Capuano V."/>
            <person name="Carter N.M."/>
            <person name="Choi S.-K."/>
            <person name="Codani J.-J."/>
            <person name="Connerton I.F."/>
            <person name="Cummings N.J."/>
            <person name="Daniel R.A."/>
            <person name="Denizot F."/>
            <person name="Devine K.M."/>
            <person name="Duesterhoeft A."/>
            <person name="Ehrlich S.D."/>
            <person name="Emmerson P.T."/>
            <person name="Entian K.-D."/>
            <person name="Errington J."/>
            <person name="Fabret C."/>
            <person name="Ferrari E."/>
            <person name="Foulger D."/>
            <person name="Fritz C."/>
            <person name="Fujita M."/>
            <person name="Fujita Y."/>
            <person name="Fuma S."/>
            <person name="Galizzi A."/>
            <person name="Galleron N."/>
            <person name="Ghim S.-Y."/>
            <person name="Glaser P."/>
            <person name="Goffeau A."/>
            <person name="Golightly E.J."/>
            <person name="Grandi G."/>
            <person name="Guiseppi G."/>
            <person name="Guy B.J."/>
            <person name="Haga K."/>
            <person name="Haiech J."/>
            <person name="Harwood C.R."/>
            <person name="Henaut A."/>
            <person name="Hilbert H."/>
            <person name="Holsappel S."/>
            <person name="Hosono S."/>
            <person name="Hullo M.-F."/>
            <person name="Itaya M."/>
            <person name="Jones L.-M."/>
            <person name="Joris B."/>
            <person name="Karamata D."/>
            <person name="Kasahara Y."/>
            <person name="Klaerr-Blanchard M."/>
            <person name="Klein C."/>
            <person name="Kobayashi Y."/>
            <person name="Koetter P."/>
            <person name="Koningstein G."/>
            <person name="Krogh S."/>
            <person name="Kumano M."/>
            <person name="Kurita K."/>
            <person name="Lapidus A."/>
            <person name="Lardinois S."/>
            <person name="Lauber J."/>
            <person name="Lazarevic V."/>
            <person name="Lee S.-M."/>
            <person name="Levine A."/>
            <person name="Liu H."/>
            <person name="Masuda S."/>
            <person name="Mauel C."/>
            <person name="Medigue C."/>
            <person name="Medina N."/>
            <person name="Mellado R.P."/>
            <person name="Mizuno M."/>
            <person name="Moestl D."/>
            <person name="Nakai S."/>
            <person name="Noback M."/>
            <person name="Noone D."/>
            <person name="O'Reilly M."/>
            <person name="Ogawa K."/>
            <person name="Ogiwara A."/>
            <person name="Oudega B."/>
            <person name="Park S.-H."/>
            <person name="Parro V."/>
            <person name="Pohl T.M."/>
            <person name="Portetelle D."/>
            <person name="Porwollik S."/>
            <person name="Prescott A.M."/>
            <person name="Presecan E."/>
            <person name="Pujic P."/>
            <person name="Purnelle B."/>
            <person name="Rapoport G."/>
            <person name="Rey M."/>
            <person name="Reynolds S."/>
            <person name="Rieger M."/>
            <person name="Rivolta C."/>
            <person name="Rocha E."/>
            <person name="Roche B."/>
            <person name="Rose M."/>
            <person name="Sadaie Y."/>
            <person name="Sato T."/>
            <person name="Scanlan E."/>
            <person name="Schleich S."/>
            <person name="Schroeter R."/>
            <person name="Scoffone F."/>
            <person name="Sekiguchi J."/>
            <person name="Sekowska A."/>
            <person name="Seror S.J."/>
            <person name="Serror P."/>
            <person name="Shin B.-S."/>
            <person name="Soldo B."/>
            <person name="Sorokin A."/>
            <person name="Tacconi E."/>
            <person name="Takagi T."/>
            <person name="Takahashi H."/>
            <person name="Takemaru K."/>
            <person name="Takeuchi M."/>
            <person name="Tamakoshi A."/>
            <person name="Tanaka T."/>
            <person name="Terpstra P."/>
            <person name="Tognoni A."/>
            <person name="Tosato V."/>
            <person name="Uchiyama S."/>
            <person name="Vandenbol M."/>
            <person name="Vannier F."/>
            <person name="Vassarotti A."/>
            <person name="Viari A."/>
            <person name="Wambutt R."/>
            <person name="Wedler E."/>
            <person name="Wedler H."/>
            <person name="Weitzenegger T."/>
            <person name="Winters P."/>
            <person name="Wipat A."/>
            <person name="Yamamoto H."/>
            <person name="Yamane K."/>
            <person name="Yasumoto K."/>
            <person name="Yata K."/>
            <person name="Yoshida K."/>
            <person name="Yoshikawa H.-F."/>
            <person name="Zumstein E."/>
            <person name="Yoshikawa H."/>
            <person name="Danchin A."/>
        </authorList>
    </citation>
    <scope>NUCLEOTIDE SEQUENCE [LARGE SCALE GENOMIC DNA]</scope>
    <source>
        <strain>168</strain>
    </source>
</reference>
<reference key="3">
    <citation type="journal article" date="2004" name="Gene">
        <title>Systematic analysis of SigD-regulated genes in Bacillus subtilis by DNA microarray and Northern blotting analyses.</title>
        <authorList>
            <person name="Serizawa M."/>
            <person name="Yamamoto H."/>
            <person name="Yamaguchi H."/>
            <person name="Fujita Y."/>
            <person name="Kobayashi K."/>
            <person name="Ogasawara N."/>
            <person name="Sekiguchi J."/>
        </authorList>
    </citation>
    <scope>INDUCTION</scope>
    <source>
        <strain>168</strain>
    </source>
</reference>
<gene>
    <name type="primary">yviE</name>
    <name type="ordered locus">BSU35390</name>
</gene>
<organism>
    <name type="scientific">Bacillus subtilis (strain 168)</name>
    <dbReference type="NCBI Taxonomy" id="224308"/>
    <lineage>
        <taxon>Bacteria</taxon>
        <taxon>Bacillati</taxon>
        <taxon>Bacillota</taxon>
        <taxon>Bacilli</taxon>
        <taxon>Bacillales</taxon>
        <taxon>Bacillaceae</taxon>
        <taxon>Bacillus</taxon>
    </lineage>
</organism>
<keyword id="KW-1185">Reference proteome</keyword>
<accession>P96502</accession>
<accession>Q795D2</accession>